<feature type="chain" id="PRO_1000135177" description="Putative transport protein VSAL_I2029">
    <location>
        <begin position="1"/>
        <end position="560"/>
    </location>
</feature>
<feature type="transmembrane region" description="Helical" evidence="1">
    <location>
        <begin position="14"/>
        <end position="34"/>
    </location>
</feature>
<feature type="transmembrane region" description="Helical" evidence="1">
    <location>
        <begin position="37"/>
        <end position="57"/>
    </location>
</feature>
<feature type="transmembrane region" description="Helical" evidence="1">
    <location>
        <begin position="66"/>
        <end position="86"/>
    </location>
</feature>
<feature type="transmembrane region" description="Helical" evidence="1">
    <location>
        <begin position="94"/>
        <end position="114"/>
    </location>
</feature>
<feature type="transmembrane region" description="Helical" evidence="1">
    <location>
        <begin position="161"/>
        <end position="181"/>
    </location>
</feature>
<feature type="transmembrane region" description="Helical" evidence="1">
    <location>
        <begin position="386"/>
        <end position="406"/>
    </location>
</feature>
<feature type="transmembrane region" description="Helical" evidence="1">
    <location>
        <begin position="409"/>
        <end position="429"/>
    </location>
</feature>
<feature type="transmembrane region" description="Helical" evidence="1">
    <location>
        <begin position="451"/>
        <end position="471"/>
    </location>
</feature>
<feature type="transmembrane region" description="Helical" evidence="1">
    <location>
        <begin position="478"/>
        <end position="498"/>
    </location>
</feature>
<feature type="transmembrane region" description="Helical" evidence="1">
    <location>
        <begin position="539"/>
        <end position="559"/>
    </location>
</feature>
<feature type="domain" description="RCK C-terminal 1" evidence="1">
    <location>
        <begin position="203"/>
        <end position="292"/>
    </location>
</feature>
<feature type="domain" description="RCK C-terminal 2" evidence="1">
    <location>
        <begin position="293"/>
        <end position="376"/>
    </location>
</feature>
<keyword id="KW-1003">Cell membrane</keyword>
<keyword id="KW-0472">Membrane</keyword>
<keyword id="KW-0677">Repeat</keyword>
<keyword id="KW-0812">Transmembrane</keyword>
<keyword id="KW-1133">Transmembrane helix</keyword>
<keyword id="KW-0813">Transport</keyword>
<proteinExistence type="inferred from homology"/>
<evidence type="ECO:0000255" key="1">
    <source>
        <dbReference type="HAMAP-Rule" id="MF_01015"/>
    </source>
</evidence>
<organism>
    <name type="scientific">Aliivibrio salmonicida (strain LFI1238)</name>
    <name type="common">Vibrio salmonicida (strain LFI1238)</name>
    <dbReference type="NCBI Taxonomy" id="316275"/>
    <lineage>
        <taxon>Bacteria</taxon>
        <taxon>Pseudomonadati</taxon>
        <taxon>Pseudomonadota</taxon>
        <taxon>Gammaproteobacteria</taxon>
        <taxon>Vibrionales</taxon>
        <taxon>Vibrionaceae</taxon>
        <taxon>Aliivibrio</taxon>
    </lineage>
</organism>
<dbReference type="EMBL" id="FM178379">
    <property type="protein sequence ID" value="CAQ79714.1"/>
    <property type="molecule type" value="Genomic_DNA"/>
</dbReference>
<dbReference type="RefSeq" id="WP_012550575.1">
    <property type="nucleotide sequence ID" value="NC_011312.1"/>
</dbReference>
<dbReference type="SMR" id="B6EHQ3"/>
<dbReference type="KEGG" id="vsa:VSAL_I2029"/>
<dbReference type="eggNOG" id="COG0569">
    <property type="taxonomic scope" value="Bacteria"/>
</dbReference>
<dbReference type="eggNOG" id="COG2985">
    <property type="taxonomic scope" value="Bacteria"/>
</dbReference>
<dbReference type="HOGENOM" id="CLU_035023_2_2_6"/>
<dbReference type="Proteomes" id="UP000001730">
    <property type="component" value="Chromosome 1"/>
</dbReference>
<dbReference type="GO" id="GO:0005886">
    <property type="term" value="C:plasma membrane"/>
    <property type="evidence" value="ECO:0007669"/>
    <property type="project" value="UniProtKB-SubCell"/>
</dbReference>
<dbReference type="GO" id="GO:0008324">
    <property type="term" value="F:monoatomic cation transmembrane transporter activity"/>
    <property type="evidence" value="ECO:0007669"/>
    <property type="project" value="InterPro"/>
</dbReference>
<dbReference type="GO" id="GO:0006813">
    <property type="term" value="P:potassium ion transport"/>
    <property type="evidence" value="ECO:0007669"/>
    <property type="project" value="InterPro"/>
</dbReference>
<dbReference type="Gene3D" id="3.30.70.1450">
    <property type="entry name" value="Regulator of K+ conductance, C-terminal domain"/>
    <property type="match status" value="2"/>
</dbReference>
<dbReference type="HAMAP" id="MF_01015">
    <property type="entry name" value="YbjL"/>
    <property type="match status" value="1"/>
</dbReference>
<dbReference type="InterPro" id="IPR050144">
    <property type="entry name" value="AAE_transporter"/>
</dbReference>
<dbReference type="InterPro" id="IPR006037">
    <property type="entry name" value="RCK_C"/>
</dbReference>
<dbReference type="InterPro" id="IPR036721">
    <property type="entry name" value="RCK_C_sf"/>
</dbReference>
<dbReference type="InterPro" id="IPR023017">
    <property type="entry name" value="Transp_YbjL_put"/>
</dbReference>
<dbReference type="InterPro" id="IPR006512">
    <property type="entry name" value="YidE_YbjL"/>
</dbReference>
<dbReference type="NCBIfam" id="NF003440">
    <property type="entry name" value="PRK04972.1"/>
    <property type="match status" value="1"/>
</dbReference>
<dbReference type="NCBIfam" id="TIGR01625">
    <property type="entry name" value="YidE_YbjL_dupl"/>
    <property type="match status" value="2"/>
</dbReference>
<dbReference type="PANTHER" id="PTHR30445">
    <property type="entry name" value="K(+)_H(+) ANTIPORTER SUBUNIT KHTT"/>
    <property type="match status" value="1"/>
</dbReference>
<dbReference type="PANTHER" id="PTHR30445:SF10">
    <property type="entry name" value="TRANSPORT PROTEIN YBJL-RELATED"/>
    <property type="match status" value="1"/>
</dbReference>
<dbReference type="Pfam" id="PF06826">
    <property type="entry name" value="Asp-Al_Ex"/>
    <property type="match status" value="2"/>
</dbReference>
<dbReference type="Pfam" id="PF02080">
    <property type="entry name" value="TrkA_C"/>
    <property type="match status" value="2"/>
</dbReference>
<dbReference type="SUPFAM" id="SSF116726">
    <property type="entry name" value="TrkA C-terminal domain-like"/>
    <property type="match status" value="2"/>
</dbReference>
<dbReference type="PROSITE" id="PS51202">
    <property type="entry name" value="RCK_C"/>
    <property type="match status" value="2"/>
</dbReference>
<comment type="subcellular location">
    <subcellularLocation>
        <location evidence="1">Cell membrane</location>
        <topology evidence="1">Multi-pass membrane protein</topology>
    </subcellularLocation>
</comment>
<comment type="similarity">
    <text evidence="1">Belongs to the AAE transporter (TC 2.A.81) family. YbjL subfamily.</text>
</comment>
<gene>
    <name type="ordered locus">VSAL_I2029</name>
</gene>
<name>Y2029_ALISL</name>
<sequence>MNIDVATLLSQNDILLLFVVLALGLFIAKVKIGSFQLGSSIGVLITALFMGSLGYTFTADSLNIGFMLFIFCVGIEAGPNFFGIFLRDGKHYLLLVLVVLISAISLSFLTGYYFNLDYGLSTGMMAGALTATPVLVGAKDALNSGLAVLPEGVDFSKVMDNLSVGYAFSYLIGLTSLILLARLLPQLQKQNLQDSAMQIAQERGIGSAGQRKVYLPIIRAYRVGQELIDWTDGKNLRELGIHRQTGCHIERIRRNGILANPDGDYILQQGDEIALVGYPDSHARLDSSFRNGKEVFDRNLLDLRIAEEEIVVKNDNIAGKRLSELNLSEYGCFLNRVVRAQIEMPIEHDIVLAKGDILQVSGEKSKVHHIADKIGFISIHSQVSDLLAFCSFFILGIMFGMITMSFGQVTFGLGNAVGLLISGITLGFLRANHPTFGYVPQGALNMTKNLGLLVFMVGIGLSAGGNIIEYFSEDGLKVLAAALIVSVIPVILAYLVGAYILKMNRALLIGAIIGARTCGPAMDVVNEHARSTIPALGYAGTYAIANILMTVAGTIMILLA</sequence>
<reference key="1">
    <citation type="journal article" date="2008" name="BMC Genomics">
        <title>The genome sequence of the fish pathogen Aliivibrio salmonicida strain LFI1238 shows extensive evidence of gene decay.</title>
        <authorList>
            <person name="Hjerde E."/>
            <person name="Lorentzen M.S."/>
            <person name="Holden M.T."/>
            <person name="Seeger K."/>
            <person name="Paulsen S."/>
            <person name="Bason N."/>
            <person name="Churcher C."/>
            <person name="Harris D."/>
            <person name="Norbertczak H."/>
            <person name="Quail M.A."/>
            <person name="Sanders S."/>
            <person name="Thurston S."/>
            <person name="Parkhill J."/>
            <person name="Willassen N.P."/>
            <person name="Thomson N.R."/>
        </authorList>
    </citation>
    <scope>NUCLEOTIDE SEQUENCE [LARGE SCALE GENOMIC DNA]</scope>
    <source>
        <strain>LFI1238</strain>
    </source>
</reference>
<accession>B6EHQ3</accession>
<protein>
    <recommendedName>
        <fullName evidence="1">Putative transport protein VSAL_I2029</fullName>
    </recommendedName>
</protein>